<evidence type="ECO:0000250" key="1"/>
<evidence type="ECO:0000250" key="2">
    <source>
        <dbReference type="UniProtKB" id="P02829"/>
    </source>
</evidence>
<evidence type="ECO:0000250" key="3">
    <source>
        <dbReference type="UniProtKB" id="P27323"/>
    </source>
</evidence>
<evidence type="ECO:0000256" key="4">
    <source>
        <dbReference type="SAM" id="MobiDB-lite"/>
    </source>
</evidence>
<evidence type="ECO:0000269" key="5">
    <source>
    </source>
</evidence>
<evidence type="ECO:0000269" key="6">
    <source>
    </source>
</evidence>
<evidence type="ECO:0000269" key="7">
    <source>
    </source>
</evidence>
<evidence type="ECO:0000269" key="8">
    <source>
    </source>
</evidence>
<evidence type="ECO:0000269" key="9">
    <source>
    </source>
</evidence>
<evidence type="ECO:0000269" key="10">
    <source>
    </source>
</evidence>
<evidence type="ECO:0000269" key="11">
    <source>
    </source>
</evidence>
<evidence type="ECO:0000269" key="12">
    <source>
    </source>
</evidence>
<evidence type="ECO:0000303" key="13">
    <source>
    </source>
</evidence>
<evidence type="ECO:0000303" key="14">
    <source>
    </source>
</evidence>
<evidence type="ECO:0000305" key="15"/>
<comment type="function">
    <text evidence="5 6 7 8 9 11 12">Molecular chaperone. Involved in RPM1-mediated resistance. Component of the RPM1/RAR1/SGT1 complex. May stabilize RPM1 and protect it from SGT1-mediated degradation. Associates with RAR1 which may function as co-chaperone. Possesses ATPase activity (PubMed:14592967, PubMed:19487680). In the absence of heat shock, negatively regulates heat-inducible genes by actively suppressing heat shock transcription factor A1D (HSFA1D) function (PubMed:17965410). Involved in the induction of heat shock transcription factor A2 (HSFA2) expression in response to oxidative stress (PubMed:20147301). Required for stomatal closure and modulates transcriptional and physiological responses to abscisic acid (ABA) (PubMed:21586649). Regulates RPP4-mediated temperature-dependent cell death and defense responses (PubMed:24611624). May assist SGT1B in the formation of SCF E3 ubiquitin ligase complexes that target the immune receptors SNC1, RPS2 and RPS4 for degradation, to regulate receptor levels and avoid autoimmunity (PubMed:24889324).</text>
</comment>
<comment type="subunit">
    <text evidence="5 6 7 10">Homodimer (PubMed:19487680, PubMed:24036116). Interacts with RPM1, RAR1 and SGT1B (PubMed:14592967, PubMed:19487680). Interacts with OEP61, OEP64 and OM64 (PubMed:24036116). Interacts with HSFA1D (PubMed:17965410).</text>
</comment>
<comment type="interaction">
    <interactant intactId="EBI-1235834">
        <id>P55737</id>
    </interactant>
    <interactant intactId="EBI-1235664">
        <id>P25854</id>
        <label>CAM4</label>
    </interactant>
    <organismsDiffer>false</organismsDiffer>
    <experiments>2</experiments>
</comment>
<comment type="interaction">
    <interactant intactId="EBI-1235834">
        <id>P55737</id>
    </interactant>
    <interactant intactId="EBI-1236097">
        <id>Q03509</id>
        <label>CAM6</label>
    </interactant>
    <organismsDiffer>false</organismsDiffer>
    <experiments>2</experiments>
</comment>
<comment type="interaction">
    <interactant intactId="EBI-1235834">
        <id>P55737</id>
    </interactant>
    <interactant intactId="EBI-1236031">
        <id>P59220</id>
        <label>CAM7</label>
    </interactant>
    <organismsDiffer>false</organismsDiffer>
    <experiments>2</experiments>
</comment>
<comment type="interaction">
    <interactant intactId="EBI-1235834">
        <id>P55737</id>
    </interactant>
    <interactant intactId="EBI-1236048">
        <id>Q9S744</id>
        <label>CML9</label>
    </interactant>
    <organismsDiffer>false</organismsDiffer>
    <experiments>2</experiments>
</comment>
<comment type="subcellular location">
    <subcellularLocation>
        <location evidence="15">Cytoplasm</location>
    </subcellularLocation>
</comment>
<comment type="alternative products">
    <event type="alternative splicing"/>
    <isoform>
        <id>P55737-1</id>
        <name>1</name>
        <sequence type="displayed"/>
    </isoform>
    <text>A number of isoforms are produced. According to EST sequences.</text>
</comment>
<comment type="tissue specificity">
    <text>Present in all tissues. Most abundantly expressed in roots followed by floral bud clusters, flowers and young fruits.</text>
</comment>
<comment type="induction">
    <text>In contrast to other major heat shock proteins, this one is also expressed at normal growth temperatures. Levels increase only slightly after heat shock.</text>
</comment>
<comment type="domain">
    <text evidence="1">The TPR repeat-binding motif mediates interaction with TPR repeat-containing proteins.</text>
</comment>
<comment type="disruption phenotype">
    <text evidence="5">No visible phenotype under normal growth condition. In case of infection, plants are altered in RPM1-mediated disease resistance.</text>
</comment>
<comment type="similarity">
    <text evidence="15">Belongs to the heat shock protein 90 family.</text>
</comment>
<sequence>MADAETFAFQAEINQLLSLIINTFYSNKEIFLRELISNSSDALDKIRFESLTDKSKLDGQPELFIHIIPDKTNNTLTIIDSGIGMTKADLVNNLGTIARSGTKEFMEALAAGADVSMIGQFGVGFYSAYLVADKVVVTTKHNDDEQYVWESQAGGSFTVTRDTSGETLGRGTKMVLYLKEDQLEYLEERRLKDLVKKHSEFISYPISLWIEKTIEKEISDDEEEEEKKDEEGKVEEVDEEKEKEEKKKKKIKEVSHEWDLVNKQKPIWMRKPEEINKEEYAAFYKSLSNDWEEHLAVKHFSVEGQLEFKAILFVPKRAPFDLFDTKKKPNNIKLYVRRVFIMDNCEDIIPEYLGFVKGIVDSEDLPLNISRETLQQNKILKVIRKNLVKKCLELFFEIAENKEDYNKFYEAFSKNLKLGIHEDSQNRTKIAELLRYHSTKSGDELTSLKDYVTRMKEGQNDIFYITGESKKAVENSPFLEKLKKKGIEVLYMVDAIDEYAIGQLKEFEGKKLVSATKEGLKLDETEDEKKKKEELKEKFEGLCKVIKDVLGDKVEKVIVSDRVVDSPCCLVTGEYGWTANMERIMKAQALRDSSMAGYMSSKKTMEINPENSIMDELRKRADADKNDKSVKDLVLLLFETALLTSGFSLDEPNTFGSRIHRMLKLGLSIDDDDAVEADAEMPPLEDDADAEGSKMEEVD</sequence>
<protein>
    <recommendedName>
        <fullName evidence="15">Heat shock protein 90-2</fullName>
        <shortName evidence="15">AtHSP90.2</shortName>
        <shortName evidence="13">AtHsp90-2</shortName>
    </recommendedName>
    <alternativeName>
        <fullName evidence="15">Heat shock protein 81-2</fullName>
        <shortName evidence="13">Hsp81-2</shortName>
    </alternativeName>
    <alternativeName>
        <fullName>Protein EARLY-RESPONSIVE TO DEHYDRATION 8</fullName>
    </alternativeName>
    <alternativeName>
        <fullName>Protein LOSS OF RECOGNITION OF AVRRPM1 2</fullName>
    </alternativeName>
    <alternativeName>
        <fullName evidence="14">Protein MUTANT SNC1-ENHANCING 12</fullName>
    </alternativeName>
</protein>
<proteinExistence type="evidence at protein level"/>
<organism>
    <name type="scientific">Arabidopsis thaliana</name>
    <name type="common">Mouse-ear cress</name>
    <dbReference type="NCBI Taxonomy" id="3702"/>
    <lineage>
        <taxon>Eukaryota</taxon>
        <taxon>Viridiplantae</taxon>
        <taxon>Streptophyta</taxon>
        <taxon>Embryophyta</taxon>
        <taxon>Tracheophyta</taxon>
        <taxon>Spermatophyta</taxon>
        <taxon>Magnoliopsida</taxon>
        <taxon>eudicotyledons</taxon>
        <taxon>Gunneridae</taxon>
        <taxon>Pentapetalae</taxon>
        <taxon>rosids</taxon>
        <taxon>malvids</taxon>
        <taxon>Brassicales</taxon>
        <taxon>Brassicaceae</taxon>
        <taxon>Camelineae</taxon>
        <taxon>Arabidopsis</taxon>
    </lineage>
</organism>
<gene>
    <name evidence="13" type="primary">HSP90-2</name>
    <name type="synonym">ERD8</name>
    <name evidence="13" type="synonym">HSP81-2</name>
    <name type="synonym">LRA2</name>
    <name evidence="14" type="synonym">MUSE12</name>
    <name type="ordered locus">At5g56030</name>
    <name type="ORF">MDA7.7</name>
</gene>
<dbReference type="EMBL" id="AB011476">
    <property type="protein sequence ID" value="BAB09285.1"/>
    <property type="molecule type" value="Genomic_DNA"/>
</dbReference>
<dbReference type="EMBL" id="CP002688">
    <property type="protein sequence ID" value="AED96711.1"/>
    <property type="molecule type" value="Genomic_DNA"/>
</dbReference>
<dbReference type="EMBL" id="AY062750">
    <property type="protein sequence ID" value="AAL32828.1"/>
    <property type="molecule type" value="mRNA"/>
</dbReference>
<dbReference type="EMBL" id="AY128805">
    <property type="protein sequence ID" value="AAM91205.1"/>
    <property type="molecule type" value="mRNA"/>
</dbReference>
<dbReference type="EMBL" id="BT000717">
    <property type="protein sequence ID" value="AAN31859.1"/>
    <property type="molecule type" value="mRNA"/>
</dbReference>
<dbReference type="EMBL" id="BT001944">
    <property type="protein sequence ID" value="AAN71943.1"/>
    <property type="molecule type" value="mRNA"/>
</dbReference>
<dbReference type="EMBL" id="BT002535">
    <property type="protein sequence ID" value="AAO00895.1"/>
    <property type="molecule type" value="mRNA"/>
</dbReference>
<dbReference type="RefSeq" id="NP_200414.1">
    <molecule id="P55737-1"/>
    <property type="nucleotide sequence ID" value="NM_124985.5"/>
</dbReference>
<dbReference type="SMR" id="P55737"/>
<dbReference type="BioGRID" id="20945">
    <property type="interactions" value="49"/>
</dbReference>
<dbReference type="DIP" id="DIP-51470N"/>
<dbReference type="FunCoup" id="P55737">
    <property type="interactions" value="3042"/>
</dbReference>
<dbReference type="IntAct" id="P55737">
    <property type="interactions" value="11"/>
</dbReference>
<dbReference type="STRING" id="3702.P55737"/>
<dbReference type="iPTMnet" id="P55737"/>
<dbReference type="MetOSite" id="P55737"/>
<dbReference type="SwissPalm" id="P55737"/>
<dbReference type="EnsemblPlants" id="AT5G56030.1">
    <molecule id="P55737-1"/>
    <property type="protein sequence ID" value="AT5G56030.1"/>
    <property type="gene ID" value="AT5G56030"/>
</dbReference>
<dbReference type="GeneID" id="835701"/>
<dbReference type="Gramene" id="AT5G56030.1">
    <molecule id="P55737-1"/>
    <property type="protein sequence ID" value="AT5G56030.1"/>
    <property type="gene ID" value="AT5G56030"/>
</dbReference>
<dbReference type="KEGG" id="ath:AT5G56030"/>
<dbReference type="Araport" id="AT5G56030"/>
<dbReference type="TAIR" id="AT5G56030">
    <property type="gene designation" value="HSP81-2"/>
</dbReference>
<dbReference type="InParanoid" id="P55737"/>
<dbReference type="PhylomeDB" id="P55737"/>
<dbReference type="CD-CODE" id="4299E36E">
    <property type="entry name" value="Nucleolus"/>
</dbReference>
<dbReference type="PRO" id="PR:P55737"/>
<dbReference type="Proteomes" id="UP000006548">
    <property type="component" value="Chromosome 5"/>
</dbReference>
<dbReference type="ExpressionAtlas" id="P55737">
    <property type="expression patterns" value="baseline and differential"/>
</dbReference>
<dbReference type="GO" id="GO:0005737">
    <property type="term" value="C:cytoplasm"/>
    <property type="evidence" value="ECO:0007669"/>
    <property type="project" value="UniProtKB-SubCell"/>
</dbReference>
<dbReference type="GO" id="GO:0005524">
    <property type="term" value="F:ATP binding"/>
    <property type="evidence" value="ECO:0007669"/>
    <property type="project" value="UniProtKB-KW"/>
</dbReference>
<dbReference type="GO" id="GO:0016887">
    <property type="term" value="F:ATP hydrolysis activity"/>
    <property type="evidence" value="ECO:0000314"/>
    <property type="project" value="UniProtKB"/>
</dbReference>
<dbReference type="GO" id="GO:0140662">
    <property type="term" value="F:ATP-dependent protein folding chaperone"/>
    <property type="evidence" value="ECO:0007669"/>
    <property type="project" value="InterPro"/>
</dbReference>
<dbReference type="GO" id="GO:0051082">
    <property type="term" value="F:unfolded protein binding"/>
    <property type="evidence" value="ECO:0007669"/>
    <property type="project" value="InterPro"/>
</dbReference>
<dbReference type="GO" id="GO:0061077">
    <property type="term" value="P:chaperone-mediated protein folding"/>
    <property type="evidence" value="ECO:0000314"/>
    <property type="project" value="UniProtKB"/>
</dbReference>
<dbReference type="GO" id="GO:0042742">
    <property type="term" value="P:defense response to bacterium"/>
    <property type="evidence" value="ECO:0000315"/>
    <property type="project" value="UniProtKB"/>
</dbReference>
<dbReference type="GO" id="GO:0045087">
    <property type="term" value="P:innate immune response"/>
    <property type="evidence" value="ECO:0007669"/>
    <property type="project" value="UniProtKB-KW"/>
</dbReference>
<dbReference type="CDD" id="cd16927">
    <property type="entry name" value="HATPase_Hsp90-like"/>
    <property type="match status" value="1"/>
</dbReference>
<dbReference type="FunFam" id="3.30.565.10:FF:000012">
    <property type="entry name" value="Heat shock cognate protein"/>
    <property type="match status" value="1"/>
</dbReference>
<dbReference type="FunFam" id="1.20.120.790:FF:000001">
    <property type="entry name" value="Heat shock protein 90 alpha"/>
    <property type="match status" value="1"/>
</dbReference>
<dbReference type="FunFam" id="3.30.230.80:FF:000001">
    <property type="entry name" value="Heat shock protein 90 alpha"/>
    <property type="match status" value="1"/>
</dbReference>
<dbReference type="FunFam" id="3.40.50.11260:FF:000001">
    <property type="entry name" value="Heat shock protein 90 alpha"/>
    <property type="match status" value="1"/>
</dbReference>
<dbReference type="Gene3D" id="3.30.230.80">
    <property type="match status" value="1"/>
</dbReference>
<dbReference type="Gene3D" id="3.40.50.11260">
    <property type="match status" value="1"/>
</dbReference>
<dbReference type="Gene3D" id="1.20.120.790">
    <property type="entry name" value="Heat shock protein 90, C-terminal domain"/>
    <property type="match status" value="1"/>
</dbReference>
<dbReference type="Gene3D" id="3.30.565.10">
    <property type="entry name" value="Histidine kinase-like ATPase, C-terminal domain"/>
    <property type="match status" value="1"/>
</dbReference>
<dbReference type="HAMAP" id="MF_00505">
    <property type="entry name" value="HSP90"/>
    <property type="match status" value="1"/>
</dbReference>
<dbReference type="InterPro" id="IPR036890">
    <property type="entry name" value="HATPase_C_sf"/>
</dbReference>
<dbReference type="InterPro" id="IPR019805">
    <property type="entry name" value="Heat_shock_protein_90_CS"/>
</dbReference>
<dbReference type="InterPro" id="IPR037196">
    <property type="entry name" value="HSP90_C"/>
</dbReference>
<dbReference type="InterPro" id="IPR001404">
    <property type="entry name" value="Hsp90_fam"/>
</dbReference>
<dbReference type="InterPro" id="IPR020575">
    <property type="entry name" value="Hsp90_N"/>
</dbReference>
<dbReference type="InterPro" id="IPR020568">
    <property type="entry name" value="Ribosomal_Su5_D2-typ_SF"/>
</dbReference>
<dbReference type="NCBIfam" id="NF003555">
    <property type="entry name" value="PRK05218.1"/>
    <property type="match status" value="1"/>
</dbReference>
<dbReference type="PANTHER" id="PTHR11528">
    <property type="entry name" value="HEAT SHOCK PROTEIN 90 FAMILY MEMBER"/>
    <property type="match status" value="1"/>
</dbReference>
<dbReference type="Pfam" id="PF13589">
    <property type="entry name" value="HATPase_c_3"/>
    <property type="match status" value="1"/>
</dbReference>
<dbReference type="Pfam" id="PF00183">
    <property type="entry name" value="HSP90"/>
    <property type="match status" value="1"/>
</dbReference>
<dbReference type="PIRSF" id="PIRSF002583">
    <property type="entry name" value="Hsp90"/>
    <property type="match status" value="1"/>
</dbReference>
<dbReference type="PRINTS" id="PR00775">
    <property type="entry name" value="HEATSHOCK90"/>
</dbReference>
<dbReference type="SMART" id="SM00387">
    <property type="entry name" value="HATPase_c"/>
    <property type="match status" value="1"/>
</dbReference>
<dbReference type="SUPFAM" id="SSF55874">
    <property type="entry name" value="ATPase domain of HSP90 chaperone/DNA topoisomerase II/histidine kinase"/>
    <property type="match status" value="1"/>
</dbReference>
<dbReference type="SUPFAM" id="SSF110942">
    <property type="entry name" value="HSP90 C-terminal domain"/>
    <property type="match status" value="1"/>
</dbReference>
<dbReference type="SUPFAM" id="SSF54211">
    <property type="entry name" value="Ribosomal protein S5 domain 2-like"/>
    <property type="match status" value="1"/>
</dbReference>
<dbReference type="PROSITE" id="PS00298">
    <property type="entry name" value="HSP90"/>
    <property type="match status" value="1"/>
</dbReference>
<feature type="chain" id="PRO_0000062947" description="Heat shock protein 90-2">
    <location>
        <begin position="1"/>
        <end position="699"/>
    </location>
</feature>
<feature type="region of interest" description="Disordered" evidence="4">
    <location>
        <begin position="219"/>
        <end position="248"/>
    </location>
</feature>
<feature type="region of interest" description="Disordered" evidence="4">
    <location>
        <begin position="674"/>
        <end position="699"/>
    </location>
</feature>
<feature type="short sequence motif" description="TPR repeat-binding">
    <location>
        <begin position="695"/>
        <end position="699"/>
    </location>
</feature>
<feature type="compositionally biased region" description="Acidic residues" evidence="4">
    <location>
        <begin position="219"/>
        <end position="228"/>
    </location>
</feature>
<feature type="compositionally biased region" description="Acidic residues" evidence="4">
    <location>
        <begin position="674"/>
        <end position="690"/>
    </location>
</feature>
<feature type="binding site" evidence="2">
    <location>
        <position position="34"/>
    </location>
    <ligand>
        <name>ATP</name>
        <dbReference type="ChEBI" id="CHEBI:30616"/>
    </ligand>
</feature>
<feature type="binding site" evidence="2">
    <location>
        <position position="38"/>
    </location>
    <ligand>
        <name>ATP</name>
        <dbReference type="ChEBI" id="CHEBI:30616"/>
    </ligand>
</feature>
<feature type="binding site" evidence="2">
    <location>
        <position position="80"/>
    </location>
    <ligand>
        <name>ATP</name>
        <dbReference type="ChEBI" id="CHEBI:30616"/>
    </ligand>
</feature>
<feature type="binding site" evidence="2">
    <location>
        <position position="85"/>
    </location>
    <ligand>
        <name>ATP</name>
        <dbReference type="ChEBI" id="CHEBI:30616"/>
    </ligand>
</feature>
<feature type="binding site" evidence="2">
    <location>
        <position position="93"/>
    </location>
    <ligand>
        <name>ATP</name>
        <dbReference type="ChEBI" id="CHEBI:30616"/>
    </ligand>
</feature>
<feature type="binding site" evidence="2">
    <location>
        <position position="99"/>
    </location>
    <ligand>
        <name>ATP</name>
        <dbReference type="ChEBI" id="CHEBI:30616"/>
    </ligand>
</feature>
<feature type="binding site" evidence="2">
    <location>
        <begin position="100"/>
        <end position="101"/>
    </location>
    <ligand>
        <name>ATP</name>
        <dbReference type="ChEBI" id="CHEBI:30616"/>
    </ligand>
</feature>
<feature type="binding site" evidence="2">
    <location>
        <begin position="120"/>
        <end position="125"/>
    </location>
    <ligand>
        <name>ATP</name>
        <dbReference type="ChEBI" id="CHEBI:30616"/>
    </ligand>
</feature>
<feature type="binding site" evidence="2">
    <location>
        <position position="172"/>
    </location>
    <ligand>
        <name>ATP</name>
        <dbReference type="ChEBI" id="CHEBI:30616"/>
    </ligand>
</feature>
<feature type="binding site" evidence="2">
    <location>
        <position position="371"/>
    </location>
    <ligand>
        <name>ATP</name>
        <dbReference type="ChEBI" id="CHEBI:30616"/>
    </ligand>
</feature>
<feature type="modified residue" description="Phosphoserine" evidence="3">
    <location>
        <position position="219"/>
    </location>
</feature>
<feature type="mutagenesis site" description="In hsp90.2-7; No effect on ATPase activity, dimerization and interaction with RAR1. Decreased interaction with SGT1B." evidence="7">
    <original>A</original>
    <variation>T</variation>
    <location>
        <position position="11"/>
    </location>
</feature>
<feature type="mutagenesis site" description="In muse12; enhances snc1-mediated autoimmune phenotypes." evidence="12">
    <original>R</original>
    <variation>H</variation>
    <location>
        <position position="33"/>
    </location>
</feature>
<feature type="mutagenesis site" description="In muse12; enhances snc1-mediated autoimmune phenotypes." evidence="12">
    <original>D</original>
    <variation>N</variation>
    <location>
        <position position="41"/>
    </location>
</feature>
<feature type="mutagenesis site" description="In hsp90.2-6; Loss of RPM1 function and accumulation. Loss of ATPase activity. Loss of dimerization. Loss of interaction with RAR1 and SGT1B." evidence="7">
    <original>A</original>
    <variation>T</variation>
    <location>
        <position position="42"/>
    </location>
</feature>
<feature type="mutagenesis site" description="In hsp90.2-3/lra2-3; Loss of RPM1 function and accumulation. Loss of ATPase activity. Loss of dimerization. Loss of interaction with RAR1 and SGT1B." evidence="5">
    <original>D</original>
    <variation>N</variation>
    <location>
        <position position="80"/>
    </location>
</feature>
<feature type="mutagenesis site" description="In hsp90.2-1/lra2-1; Loss of RPM1 function and accumulation. Loss of ATPase activity. Loss of dimerization. Loss of interaction with RAR1 and SGT1B." evidence="5">
    <original>G</original>
    <variation>E</variation>
    <location>
        <position position="95"/>
    </location>
</feature>
<feature type="mutagenesis site" description="In hsp90.2-4/lra2-4; Loss of RPM1 function and accumulation. Loss of ATPase activity. Loss of dimerization. Normal interaction with RAR1. Loss of interaction with SGT1B." evidence="5">
    <original>S</original>
    <variation>F</variation>
    <location>
        <position position="100"/>
    </location>
</feature>
<feature type="mutagenesis site" description="In hsp90.2-6; Decreased dimerization. Loss of ATPase activity and interaction with RAR1 and SGT1B." evidence="7">
    <original>R</original>
    <variation>C</variation>
    <location>
        <position position="337"/>
    </location>
</feature>
<feature type="sequence conflict" description="In Ref. 4; AAN31859." evidence="15" ref="4">
    <original>S</original>
    <variation>N</variation>
    <location>
        <position position="657"/>
    </location>
</feature>
<reference key="1">
    <citation type="journal article" date="1992" name="Plant Physiol.">
        <title>Isolation and analysis of the expression of two genes for the 81-kilodalton heat-shock proteins from Arabidopsis.</title>
        <authorList>
            <person name="Takahashi T."/>
            <person name="Naito S."/>
            <person name="Komeda Y."/>
        </authorList>
    </citation>
    <scope>NUCLEOTIDE SEQUENCE [GENOMIC DNA]</scope>
    <source>
        <strain>cv. Columbia</strain>
        <tissue>Seedling</tissue>
    </source>
</reference>
<reference key="2">
    <citation type="journal article" date="1998" name="DNA Res.">
        <title>Structural analysis of Arabidopsis thaliana chromosome 5. V. Sequence features of the regions of 1,381,565 bp covered by twenty one physically assigned P1 and TAC clones.</title>
        <authorList>
            <person name="Kaneko T."/>
            <person name="Kotani H."/>
            <person name="Nakamura Y."/>
            <person name="Sato S."/>
            <person name="Asamizu E."/>
            <person name="Miyajima N."/>
            <person name="Tabata S."/>
        </authorList>
    </citation>
    <scope>NUCLEOTIDE SEQUENCE [LARGE SCALE GENOMIC DNA]</scope>
    <source>
        <strain>cv. Columbia</strain>
    </source>
</reference>
<reference key="3">
    <citation type="journal article" date="2017" name="Plant J.">
        <title>Araport11: a complete reannotation of the Arabidopsis thaliana reference genome.</title>
        <authorList>
            <person name="Cheng C.Y."/>
            <person name="Krishnakumar V."/>
            <person name="Chan A.P."/>
            <person name="Thibaud-Nissen F."/>
            <person name="Schobel S."/>
            <person name="Town C.D."/>
        </authorList>
    </citation>
    <scope>GENOME REANNOTATION</scope>
    <source>
        <strain>cv. Columbia</strain>
    </source>
</reference>
<reference key="4">
    <citation type="journal article" date="2003" name="Science">
        <title>Empirical analysis of transcriptional activity in the Arabidopsis genome.</title>
        <authorList>
            <person name="Yamada K."/>
            <person name="Lim J."/>
            <person name="Dale J.M."/>
            <person name="Chen H."/>
            <person name="Shinn P."/>
            <person name="Palm C.J."/>
            <person name="Southwick A.M."/>
            <person name="Wu H.C."/>
            <person name="Kim C.J."/>
            <person name="Nguyen M."/>
            <person name="Pham P.K."/>
            <person name="Cheuk R.F."/>
            <person name="Karlin-Newmann G."/>
            <person name="Liu S.X."/>
            <person name="Lam B."/>
            <person name="Sakano H."/>
            <person name="Wu T."/>
            <person name="Yu G."/>
            <person name="Miranda M."/>
            <person name="Quach H.L."/>
            <person name="Tripp M."/>
            <person name="Chang C.H."/>
            <person name="Lee J.M."/>
            <person name="Toriumi M.J."/>
            <person name="Chan M.M."/>
            <person name="Tang C.C."/>
            <person name="Onodera C.S."/>
            <person name="Deng J.M."/>
            <person name="Akiyama K."/>
            <person name="Ansari Y."/>
            <person name="Arakawa T."/>
            <person name="Banh J."/>
            <person name="Banno F."/>
            <person name="Bowser L."/>
            <person name="Brooks S.Y."/>
            <person name="Carninci P."/>
            <person name="Chao Q."/>
            <person name="Choy N."/>
            <person name="Enju A."/>
            <person name="Goldsmith A.D."/>
            <person name="Gurjal M."/>
            <person name="Hansen N.F."/>
            <person name="Hayashizaki Y."/>
            <person name="Johnson-Hopson C."/>
            <person name="Hsuan V.W."/>
            <person name="Iida K."/>
            <person name="Karnes M."/>
            <person name="Khan S."/>
            <person name="Koesema E."/>
            <person name="Ishida J."/>
            <person name="Jiang P.X."/>
            <person name="Jones T."/>
            <person name="Kawai J."/>
            <person name="Kamiya A."/>
            <person name="Meyers C."/>
            <person name="Nakajima M."/>
            <person name="Narusaka M."/>
            <person name="Seki M."/>
            <person name="Sakurai T."/>
            <person name="Satou M."/>
            <person name="Tamse R."/>
            <person name="Vaysberg M."/>
            <person name="Wallender E.K."/>
            <person name="Wong C."/>
            <person name="Yamamura Y."/>
            <person name="Yuan S."/>
            <person name="Shinozaki K."/>
            <person name="Davis R.W."/>
            <person name="Theologis A."/>
            <person name="Ecker J.R."/>
        </authorList>
    </citation>
    <scope>NUCLEOTIDE SEQUENCE [LARGE SCALE MRNA]</scope>
    <source>
        <strain>cv. Columbia</strain>
    </source>
</reference>
<reference key="5">
    <citation type="journal article" date="2001" name="Cell Stress Chaperones">
        <title>The Hsp90 family of proteins in Arabidopsis thaliana.</title>
        <authorList>
            <person name="Krishna P."/>
            <person name="Gloor G."/>
        </authorList>
    </citation>
    <scope>GENE FAMILY</scope>
    <scope>NOMENCLATURE</scope>
</reference>
<reference key="6">
    <citation type="journal article" date="2003" name="EMBO J.">
        <title>Cytosolic HSP90 associates with and modulates the Arabidopsis RPM1 disease resistance protein.</title>
        <authorList>
            <person name="Hubert D.A."/>
            <person name="Tornero P."/>
            <person name="Belkhadir Y."/>
            <person name="Krishna P."/>
            <person name="Takahashi A."/>
            <person name="Shirasu K."/>
            <person name="Dangl J.L."/>
        </authorList>
    </citation>
    <scope>FUNCTION</scope>
    <scope>INTERACTION WITH RPM1; RAR1 AND SGT1B</scope>
    <scope>DISRUPTION PHENOTYPE</scope>
    <scope>MUTAGENESIS OF ASP-80; GLY-95 AND SER-100</scope>
</reference>
<reference key="7">
    <citation type="journal article" date="2007" name="J. Biol. Chem.">
        <title>Cytosolic HSP90 regulates the heat shock response that is responsible for heat acclimation in Arabidopsis thaliana.</title>
        <authorList>
            <person name="Yamada K."/>
            <person name="Fukao Y."/>
            <person name="Hayashi M."/>
            <person name="Fukazawa M."/>
            <person name="Suzuki I."/>
            <person name="Nishimura M."/>
        </authorList>
    </citation>
    <scope>FUNCTION</scope>
    <scope>INTERACTION WITH HSFA1D</scope>
</reference>
<reference key="8">
    <citation type="journal article" date="2009" name="J. Proteomics">
        <title>Phosphoproteomic analysis of nuclei-enriched fractions from Arabidopsis thaliana.</title>
        <authorList>
            <person name="Jones A.M.E."/>
            <person name="MacLean D."/>
            <person name="Studholme D.J."/>
            <person name="Serna-Sanz A."/>
            <person name="Andreasson E."/>
            <person name="Rathjen J.P."/>
            <person name="Peck S.C."/>
        </authorList>
    </citation>
    <scope>IDENTIFICATION BY MASS SPECTROMETRY [LARGE SCALE ANALYSIS]</scope>
    <source>
        <strain>cv. Columbia</strain>
    </source>
</reference>
<reference key="9">
    <citation type="journal article" date="2009" name="Proc. Natl. Acad. Sci. U.S.A.">
        <title>Specific Arabidopsis HSP90.2 alleles recapitulate RAR1 cochaperone function in plant NB-LRR disease resistance protein regulation.</title>
        <authorList>
            <person name="Hubert D.A."/>
            <person name="He Y."/>
            <person name="McNulty B.C."/>
            <person name="Tornero P."/>
            <person name="Dangl J.L."/>
        </authorList>
    </citation>
    <scope>FUNCTION</scope>
    <scope>INTERACTION WITH RAR1 AND SGT1B</scope>
    <scope>MUTAGENESIS OF ALA-11; ALA-42 AND ARG-337</scope>
</reference>
<reference key="10">
    <citation type="journal article" date="2010" name="Plant Cell Physiol.">
        <title>The 26S proteasome function and Hsp90 activity involved in the regulation of HsfA2 expression in response to oxidative stress.</title>
        <authorList>
            <person name="Nishizawa-Yokoi A."/>
            <person name="Tainaka H."/>
            <person name="Yoshida E."/>
            <person name="Tamoi M."/>
            <person name="Yabuta Y."/>
            <person name="Shigeoka S."/>
        </authorList>
    </citation>
    <scope>FUNCTION</scope>
</reference>
<reference key="11">
    <citation type="journal article" date="2011" name="Plant Physiol.">
        <title>The cytosolic/nuclear HSC70 and HSP90 molecular chaperones are important for stomatal closure and modulate abscisic acid-dependent physiological responses in Arabidopsis.</title>
        <authorList>
            <person name="Clement M."/>
            <person name="Leonhardt N."/>
            <person name="Droillard M.J."/>
            <person name="Reiter I."/>
            <person name="Montillet J.L."/>
            <person name="Genty B."/>
            <person name="Lauriere C."/>
            <person name="Nussaume L."/>
            <person name="Noel L.D."/>
        </authorList>
    </citation>
    <scope>FUNCTION</scope>
</reference>
<reference key="12">
    <citation type="journal article" date="2013" name="J. Biol. Chem.">
        <title>Quantification of interaction strengths between chaperones and tetratricopeptide repeat domain-containing membrane proteins.</title>
        <authorList>
            <person name="Schweiger R."/>
            <person name="Soll J."/>
            <person name="Jung K."/>
            <person name="Heermann R."/>
            <person name="Schwenkert S."/>
        </authorList>
    </citation>
    <scope>HOMODIMERIZATION</scope>
    <scope>INTERACTION WITH OEP61; OEP64 AND OM64</scope>
</reference>
<reference key="13">
    <citation type="journal article" date="2014" name="New Phytol.">
        <title>Arabidopsis HSP90 protein modulates RPP4-mediated temperature-dependent cell death and defense responses.</title>
        <authorList>
            <person name="Bao F."/>
            <person name="Huang X."/>
            <person name="Zhu C."/>
            <person name="Zhang X."/>
            <person name="Li X."/>
            <person name="Yang S."/>
        </authorList>
    </citation>
    <scope>FUNCTION</scope>
</reference>
<reference key="14">
    <citation type="journal article" date="2014" name="Plant J.">
        <title>HSP90s are required for NLR immune receptor accumulation in Arabidopsis.</title>
        <authorList>
            <person name="Huang S."/>
            <person name="Monaghan J."/>
            <person name="Zhong X."/>
            <person name="Lin L."/>
            <person name="Sun T."/>
            <person name="Dong O.X."/>
            <person name="Li X."/>
        </authorList>
    </citation>
    <scope>FUNCTION</scope>
    <scope>MUTAGENESIS OF ARG-33 AND ASP-41</scope>
</reference>
<accession>P55737</accession>
<accession>Q8H158</accession>
<keyword id="KW-0025">Alternative splicing</keyword>
<keyword id="KW-0067">ATP-binding</keyword>
<keyword id="KW-0143">Chaperone</keyword>
<keyword id="KW-0963">Cytoplasm</keyword>
<keyword id="KW-0391">Immunity</keyword>
<keyword id="KW-0399">Innate immunity</keyword>
<keyword id="KW-0547">Nucleotide-binding</keyword>
<keyword id="KW-0597">Phosphoprotein</keyword>
<keyword id="KW-0611">Plant defense</keyword>
<keyword id="KW-1185">Reference proteome</keyword>
<keyword id="KW-0346">Stress response</keyword>
<name>HS902_ARATH</name>